<organism>
    <name type="scientific">Bos taurus</name>
    <name type="common">Bovine</name>
    <dbReference type="NCBI Taxonomy" id="9913"/>
    <lineage>
        <taxon>Eukaryota</taxon>
        <taxon>Metazoa</taxon>
        <taxon>Chordata</taxon>
        <taxon>Craniata</taxon>
        <taxon>Vertebrata</taxon>
        <taxon>Euteleostomi</taxon>
        <taxon>Mammalia</taxon>
        <taxon>Eutheria</taxon>
        <taxon>Laurasiatheria</taxon>
        <taxon>Artiodactyla</taxon>
        <taxon>Ruminantia</taxon>
        <taxon>Pecora</taxon>
        <taxon>Bovidae</taxon>
        <taxon>Bovinae</taxon>
        <taxon>Bos</taxon>
    </lineage>
</organism>
<comment type="function">
    <text>GTP-binding protein that functions as an allosteric activator of the cholera toxin catalytic subunit, an ADP-ribosyltransferase. Involved in protein trafficking; may modulate vesicle budding and uncoating within the Golgi apparatus.</text>
</comment>
<comment type="subcellular location">
    <subcellularLocation>
        <location>Golgi apparatus</location>
    </subcellularLocation>
</comment>
<comment type="similarity">
    <text evidence="3">Belongs to the small GTPase superfamily. Arf family.</text>
</comment>
<accession>P84081</accession>
<accession>A4FUC3</accession>
<accession>P10947</accession>
<accession>P16500</accession>
<evidence type="ECO:0000250" key="1"/>
<evidence type="ECO:0000255" key="2"/>
<evidence type="ECO:0000305" key="3"/>
<keyword id="KW-0931">ER-Golgi transport</keyword>
<keyword id="KW-0333">Golgi apparatus</keyword>
<keyword id="KW-0342">GTP-binding</keyword>
<keyword id="KW-0449">Lipoprotein</keyword>
<keyword id="KW-0519">Myristate</keyword>
<keyword id="KW-0547">Nucleotide-binding</keyword>
<keyword id="KW-0653">Protein transport</keyword>
<keyword id="KW-1185">Reference proteome</keyword>
<keyword id="KW-0813">Transport</keyword>
<proteinExistence type="evidence at transcript level"/>
<gene>
    <name type="primary">ARF2</name>
</gene>
<name>ARF2_BOVIN</name>
<sequence>MGNVFEKLFKSLFGKKEMRILMVGLDAAGKTTILYKLKLGEIVTTIPTIGFNVETVEYKNISFTVWDVGGQDKIRPLWRHYFQNTQGLIFVVDSNDRERVNEAREELTRMLAEDELRDAVLLVFVNKQDLPNAMNAAEITDKLGLHSLRQRNWYIQATCATSGDGLYEGLDWLSNQLKNQK</sequence>
<reference key="1">
    <citation type="journal article" date="1988" name="Proc. Natl. Acad. Sci. U.S.A.">
        <title>Guanine nucleotide-binding proteins that enhance choleragen ADP-ribosyltransferase activity: nucleotide and deduced amino acid sequence of an ADP-ribosylation factor cDNA.</title>
        <authorList>
            <person name="Price S.R."/>
            <person name="Nightingale M."/>
            <person name="Tsai S.-C."/>
            <person name="Williamson K.C."/>
            <person name="Adamik R."/>
            <person name="Chen H.-C."/>
            <person name="Moss J."/>
            <person name="Vaughan M."/>
        </authorList>
    </citation>
    <scope>NUCLEOTIDE SEQUENCE [MRNA]</scope>
</reference>
<reference key="2">
    <citation type="journal article" date="1993" name="J. Biol. Chem.">
        <title>Characterization of the gene for ADP-ribosylation factor (ARF) 2, a developmentally regulated, selectively expressed member of the ARF family of approximately 20-kDa guanine nucleotide-binding proteins.</title>
        <authorList>
            <person name="Serventi I.M."/>
            <person name="Cavanaugh E."/>
            <person name="Moss J."/>
            <person name="Vaughan M."/>
        </authorList>
    </citation>
    <scope>NUCLEOTIDE SEQUENCE [GENOMIC DNA / MRNA]</scope>
    <source>
        <tissue>Retina</tissue>
    </source>
</reference>
<reference key="3">
    <citation type="submission" date="2006-04" db="EMBL/GenBank/DDBJ databases">
        <authorList>
            <consortium name="NIH - Mammalian Gene Collection (MGC) project"/>
        </authorList>
    </citation>
    <scope>NUCLEOTIDE SEQUENCE [LARGE SCALE MRNA]</scope>
    <source>
        <strain>Hereford</strain>
        <tissue>Uterus</tissue>
    </source>
</reference>
<feature type="initiator methionine" description="Removed" evidence="2">
    <location>
        <position position="1"/>
    </location>
</feature>
<feature type="chain" id="PRO_0000207383" description="ADP-ribosylation factor 2">
    <location>
        <begin position="2"/>
        <end position="181"/>
    </location>
</feature>
<feature type="binding site" evidence="1">
    <location>
        <begin position="24"/>
        <end position="31"/>
    </location>
    <ligand>
        <name>GTP</name>
        <dbReference type="ChEBI" id="CHEBI:37565"/>
    </ligand>
</feature>
<feature type="binding site" evidence="1">
    <location>
        <begin position="67"/>
        <end position="71"/>
    </location>
    <ligand>
        <name>GTP</name>
        <dbReference type="ChEBI" id="CHEBI:37565"/>
    </ligand>
</feature>
<feature type="binding site" evidence="1">
    <location>
        <begin position="126"/>
        <end position="129"/>
    </location>
    <ligand>
        <name>GTP</name>
        <dbReference type="ChEBI" id="CHEBI:37565"/>
    </ligand>
</feature>
<feature type="lipid moiety-binding region" description="N-myristoyl glycine" evidence="2">
    <location>
        <position position="2"/>
    </location>
</feature>
<protein>
    <recommendedName>
        <fullName>ADP-ribosylation factor 2</fullName>
    </recommendedName>
</protein>
<dbReference type="EMBL" id="J03794">
    <property type="protein sequence ID" value="AAA30383.1"/>
    <property type="molecule type" value="mRNA"/>
</dbReference>
<dbReference type="EMBL" id="M88287">
    <property type="protein sequence ID" value="AAA30754.1"/>
    <property type="molecule type" value="mRNA"/>
</dbReference>
<dbReference type="EMBL" id="M88292">
    <property type="protein sequence ID" value="AAA18982.1"/>
    <property type="molecule type" value="Genomic_DNA"/>
</dbReference>
<dbReference type="EMBL" id="M88289">
    <property type="protein sequence ID" value="AAA18982.1"/>
    <property type="status" value="JOINED"/>
    <property type="molecule type" value="Genomic_DNA"/>
</dbReference>
<dbReference type="EMBL" id="M88290">
    <property type="protein sequence ID" value="AAA18982.1"/>
    <property type="status" value="JOINED"/>
    <property type="molecule type" value="Genomic_DNA"/>
</dbReference>
<dbReference type="EMBL" id="M88291">
    <property type="protein sequence ID" value="AAA18982.1"/>
    <property type="status" value="JOINED"/>
    <property type="molecule type" value="Genomic_DNA"/>
</dbReference>
<dbReference type="EMBL" id="BC114693">
    <property type="protein sequence ID" value="AAI14694.1"/>
    <property type="molecule type" value="mRNA"/>
</dbReference>
<dbReference type="PIR" id="A45422">
    <property type="entry name" value="A45422"/>
</dbReference>
<dbReference type="RefSeq" id="NP_777114.1">
    <property type="nucleotide sequence ID" value="NM_174689.3"/>
</dbReference>
<dbReference type="SMR" id="P84081"/>
<dbReference type="FunCoup" id="P84081">
    <property type="interactions" value="2002"/>
</dbReference>
<dbReference type="STRING" id="9913.ENSBTAP00000059559"/>
<dbReference type="PaxDb" id="9913-ENSBTAP00000008925"/>
<dbReference type="PeptideAtlas" id="P84081"/>
<dbReference type="Ensembl" id="ENSBTAT00000008925.6">
    <property type="protein sequence ID" value="ENSBTAP00000008925.4"/>
    <property type="gene ID" value="ENSBTAG00000006785.6"/>
</dbReference>
<dbReference type="GeneID" id="282601"/>
<dbReference type="KEGG" id="bta:282601"/>
<dbReference type="CTD" id="11841"/>
<dbReference type="VEuPathDB" id="HostDB:ENSBTAG00000006785"/>
<dbReference type="eggNOG" id="KOG0070">
    <property type="taxonomic scope" value="Eukaryota"/>
</dbReference>
<dbReference type="GeneTree" id="ENSGT00950000183080"/>
<dbReference type="HOGENOM" id="CLU_040729_9_3_1"/>
<dbReference type="InParanoid" id="P84081"/>
<dbReference type="OrthoDB" id="2011769at2759"/>
<dbReference type="TreeFam" id="TF300808"/>
<dbReference type="Proteomes" id="UP000009136">
    <property type="component" value="Chromosome 19"/>
</dbReference>
<dbReference type="Bgee" id="ENSBTAG00000006785">
    <property type="expression patterns" value="Expressed in diaphragm and 105 other cell types or tissues"/>
</dbReference>
<dbReference type="GO" id="GO:0005737">
    <property type="term" value="C:cytoplasm"/>
    <property type="evidence" value="ECO:0000318"/>
    <property type="project" value="GO_Central"/>
</dbReference>
<dbReference type="GO" id="GO:0005794">
    <property type="term" value="C:Golgi apparatus"/>
    <property type="evidence" value="ECO:0000250"/>
    <property type="project" value="UniProtKB"/>
</dbReference>
<dbReference type="GO" id="GO:0005886">
    <property type="term" value="C:plasma membrane"/>
    <property type="evidence" value="ECO:0000318"/>
    <property type="project" value="GO_Central"/>
</dbReference>
<dbReference type="GO" id="GO:0005525">
    <property type="term" value="F:GTP binding"/>
    <property type="evidence" value="ECO:0000318"/>
    <property type="project" value="GO_Central"/>
</dbReference>
<dbReference type="GO" id="GO:0003924">
    <property type="term" value="F:GTPase activity"/>
    <property type="evidence" value="ECO:0007669"/>
    <property type="project" value="InterPro"/>
</dbReference>
<dbReference type="GO" id="GO:0006886">
    <property type="term" value="P:intracellular protein transport"/>
    <property type="evidence" value="ECO:0000318"/>
    <property type="project" value="GO_Central"/>
</dbReference>
<dbReference type="GO" id="GO:0016192">
    <property type="term" value="P:vesicle-mediated transport"/>
    <property type="evidence" value="ECO:0000318"/>
    <property type="project" value="GO_Central"/>
</dbReference>
<dbReference type="CDD" id="cd04150">
    <property type="entry name" value="Arf1_5_like"/>
    <property type="match status" value="1"/>
</dbReference>
<dbReference type="FunFam" id="3.40.50.300:FF:003500">
    <property type="entry name" value="ADP-ribosylation factor 1"/>
    <property type="match status" value="1"/>
</dbReference>
<dbReference type="Gene3D" id="3.40.50.300">
    <property type="entry name" value="P-loop containing nucleotide triphosphate hydrolases"/>
    <property type="match status" value="1"/>
</dbReference>
<dbReference type="InterPro" id="IPR045872">
    <property type="entry name" value="Arf1-5-like"/>
</dbReference>
<dbReference type="InterPro" id="IPR027417">
    <property type="entry name" value="P-loop_NTPase"/>
</dbReference>
<dbReference type="InterPro" id="IPR005225">
    <property type="entry name" value="Small_GTP-bd"/>
</dbReference>
<dbReference type="InterPro" id="IPR024156">
    <property type="entry name" value="Small_GTPase_ARF"/>
</dbReference>
<dbReference type="InterPro" id="IPR006689">
    <property type="entry name" value="Small_GTPase_ARF/SAR"/>
</dbReference>
<dbReference type="NCBIfam" id="TIGR00231">
    <property type="entry name" value="small_GTP"/>
    <property type="match status" value="1"/>
</dbReference>
<dbReference type="PANTHER" id="PTHR11711">
    <property type="entry name" value="ADP RIBOSYLATION FACTOR-RELATED"/>
    <property type="match status" value="1"/>
</dbReference>
<dbReference type="Pfam" id="PF00025">
    <property type="entry name" value="Arf"/>
    <property type="match status" value="1"/>
</dbReference>
<dbReference type="PRINTS" id="PR00328">
    <property type="entry name" value="SAR1GTPBP"/>
</dbReference>
<dbReference type="SMART" id="SM00177">
    <property type="entry name" value="ARF"/>
    <property type="match status" value="1"/>
</dbReference>
<dbReference type="SMART" id="SM00175">
    <property type="entry name" value="RAB"/>
    <property type="match status" value="1"/>
</dbReference>
<dbReference type="SMART" id="SM00178">
    <property type="entry name" value="SAR"/>
    <property type="match status" value="1"/>
</dbReference>
<dbReference type="SUPFAM" id="SSF52540">
    <property type="entry name" value="P-loop containing nucleoside triphosphate hydrolases"/>
    <property type="match status" value="1"/>
</dbReference>
<dbReference type="PROSITE" id="PS51417">
    <property type="entry name" value="ARF"/>
    <property type="match status" value="1"/>
</dbReference>